<dbReference type="EC" id="7.2.2.6" evidence="1"/>
<dbReference type="EMBL" id="CP000485">
    <property type="protein sequence ID" value="ABK84056.1"/>
    <property type="molecule type" value="Genomic_DNA"/>
</dbReference>
<dbReference type="SMR" id="A0RA13"/>
<dbReference type="KEGG" id="btl:BALH_0674"/>
<dbReference type="HOGENOM" id="CLU_025728_2_0_9"/>
<dbReference type="GO" id="GO:0005886">
    <property type="term" value="C:plasma membrane"/>
    <property type="evidence" value="ECO:0007669"/>
    <property type="project" value="UniProtKB-SubCell"/>
</dbReference>
<dbReference type="GO" id="GO:0005524">
    <property type="term" value="F:ATP binding"/>
    <property type="evidence" value="ECO:0007669"/>
    <property type="project" value="UniProtKB-UniRule"/>
</dbReference>
<dbReference type="GO" id="GO:0016887">
    <property type="term" value="F:ATP hydrolysis activity"/>
    <property type="evidence" value="ECO:0007669"/>
    <property type="project" value="InterPro"/>
</dbReference>
<dbReference type="GO" id="GO:0000287">
    <property type="term" value="F:magnesium ion binding"/>
    <property type="evidence" value="ECO:0007669"/>
    <property type="project" value="UniProtKB-UniRule"/>
</dbReference>
<dbReference type="GO" id="GO:0008556">
    <property type="term" value="F:P-type potassium transmembrane transporter activity"/>
    <property type="evidence" value="ECO:0007669"/>
    <property type="project" value="UniProtKB-UniRule"/>
</dbReference>
<dbReference type="CDD" id="cd02078">
    <property type="entry name" value="P-type_ATPase_K"/>
    <property type="match status" value="1"/>
</dbReference>
<dbReference type="FunFam" id="2.70.150.10:FF:000010">
    <property type="entry name" value="Potassium-transporting ATPase ATP-binding subunit"/>
    <property type="match status" value="1"/>
</dbReference>
<dbReference type="FunFam" id="3.40.1110.10:FF:000007">
    <property type="entry name" value="Potassium-transporting ATPase ATP-binding subunit"/>
    <property type="match status" value="1"/>
</dbReference>
<dbReference type="Gene3D" id="3.40.1110.10">
    <property type="entry name" value="Calcium-transporting ATPase, cytoplasmic domain N"/>
    <property type="match status" value="1"/>
</dbReference>
<dbReference type="Gene3D" id="2.70.150.10">
    <property type="entry name" value="Calcium-transporting ATPase, cytoplasmic transduction domain A"/>
    <property type="match status" value="1"/>
</dbReference>
<dbReference type="Gene3D" id="3.40.50.1000">
    <property type="entry name" value="HAD superfamily/HAD-like"/>
    <property type="match status" value="1"/>
</dbReference>
<dbReference type="HAMAP" id="MF_00285">
    <property type="entry name" value="KdpB"/>
    <property type="match status" value="1"/>
</dbReference>
<dbReference type="InterPro" id="IPR023299">
    <property type="entry name" value="ATPase_P-typ_cyto_dom_N"/>
</dbReference>
<dbReference type="InterPro" id="IPR018303">
    <property type="entry name" value="ATPase_P-typ_P_site"/>
</dbReference>
<dbReference type="InterPro" id="IPR023298">
    <property type="entry name" value="ATPase_P-typ_TM_dom_sf"/>
</dbReference>
<dbReference type="InterPro" id="IPR008250">
    <property type="entry name" value="ATPase_P-typ_transduc_dom_A_sf"/>
</dbReference>
<dbReference type="InterPro" id="IPR036412">
    <property type="entry name" value="HAD-like_sf"/>
</dbReference>
<dbReference type="InterPro" id="IPR023214">
    <property type="entry name" value="HAD_sf"/>
</dbReference>
<dbReference type="InterPro" id="IPR006391">
    <property type="entry name" value="P-type_ATPase_bsu_IA"/>
</dbReference>
<dbReference type="InterPro" id="IPR001757">
    <property type="entry name" value="P_typ_ATPase"/>
</dbReference>
<dbReference type="InterPro" id="IPR044492">
    <property type="entry name" value="P_typ_ATPase_HD_dom"/>
</dbReference>
<dbReference type="NCBIfam" id="TIGR01494">
    <property type="entry name" value="ATPase_P-type"/>
    <property type="match status" value="2"/>
</dbReference>
<dbReference type="NCBIfam" id="TIGR01497">
    <property type="entry name" value="kdpB"/>
    <property type="match status" value="1"/>
</dbReference>
<dbReference type="PANTHER" id="PTHR43743">
    <property type="entry name" value="POTASSIUM-TRANSPORTING ATPASE ATP-BINDING SUBUNIT"/>
    <property type="match status" value="1"/>
</dbReference>
<dbReference type="PANTHER" id="PTHR43743:SF1">
    <property type="entry name" value="POTASSIUM-TRANSPORTING ATPASE ATP-BINDING SUBUNIT"/>
    <property type="match status" value="1"/>
</dbReference>
<dbReference type="Pfam" id="PF00122">
    <property type="entry name" value="E1-E2_ATPase"/>
    <property type="match status" value="1"/>
</dbReference>
<dbReference type="Pfam" id="PF00702">
    <property type="entry name" value="Hydrolase"/>
    <property type="match status" value="1"/>
</dbReference>
<dbReference type="PRINTS" id="PR00119">
    <property type="entry name" value="CATATPASE"/>
</dbReference>
<dbReference type="SFLD" id="SFLDS00003">
    <property type="entry name" value="Haloacid_Dehalogenase"/>
    <property type="match status" value="1"/>
</dbReference>
<dbReference type="SFLD" id="SFLDF00027">
    <property type="entry name" value="p-type_atpase"/>
    <property type="match status" value="1"/>
</dbReference>
<dbReference type="SUPFAM" id="SSF81653">
    <property type="entry name" value="Calcium ATPase, transduction domain A"/>
    <property type="match status" value="1"/>
</dbReference>
<dbReference type="SUPFAM" id="SSF81665">
    <property type="entry name" value="Calcium ATPase, transmembrane domain M"/>
    <property type="match status" value="1"/>
</dbReference>
<dbReference type="SUPFAM" id="SSF56784">
    <property type="entry name" value="HAD-like"/>
    <property type="match status" value="1"/>
</dbReference>
<dbReference type="PROSITE" id="PS00154">
    <property type="entry name" value="ATPASE_E1_E2"/>
    <property type="match status" value="1"/>
</dbReference>
<gene>
    <name evidence="1" type="primary">kdpB</name>
    <name type="ordered locus">BALH_0674</name>
</gene>
<proteinExistence type="inferred from homology"/>
<feature type="chain" id="PRO_1000022432" description="Potassium-transporting ATPase ATP-binding subunit">
    <location>
        <begin position="1"/>
        <end position="692"/>
    </location>
</feature>
<feature type="transmembrane region" description="Helical" evidence="1">
    <location>
        <begin position="50"/>
        <end position="70"/>
    </location>
</feature>
<feature type="transmembrane region" description="Helical" evidence="1">
    <location>
        <begin position="74"/>
        <end position="94"/>
    </location>
</feature>
<feature type="transmembrane region" description="Helical" evidence="1">
    <location>
        <begin position="240"/>
        <end position="260"/>
    </location>
</feature>
<feature type="transmembrane region" description="Helical" evidence="1">
    <location>
        <begin position="266"/>
        <end position="286"/>
    </location>
</feature>
<feature type="transmembrane region" description="Helical" evidence="1">
    <location>
        <begin position="600"/>
        <end position="620"/>
    </location>
</feature>
<feature type="transmembrane region" description="Helical" evidence="1">
    <location>
        <begin position="628"/>
        <end position="648"/>
    </location>
</feature>
<feature type="transmembrane region" description="Helical" evidence="1">
    <location>
        <begin position="672"/>
        <end position="692"/>
    </location>
</feature>
<feature type="active site" description="4-aspartylphosphate intermediate" evidence="1">
    <location>
        <position position="319"/>
    </location>
</feature>
<feature type="binding site" evidence="1">
    <location>
        <position position="356"/>
    </location>
    <ligand>
        <name>ATP</name>
        <dbReference type="ChEBI" id="CHEBI:30616"/>
    </ligand>
</feature>
<feature type="binding site" evidence="1">
    <location>
        <position position="360"/>
    </location>
    <ligand>
        <name>ATP</name>
        <dbReference type="ChEBI" id="CHEBI:30616"/>
    </ligand>
</feature>
<feature type="binding site" evidence="1">
    <location>
        <begin position="388"/>
        <end position="395"/>
    </location>
    <ligand>
        <name>ATP</name>
        <dbReference type="ChEBI" id="CHEBI:30616"/>
    </ligand>
</feature>
<feature type="binding site" evidence="1">
    <location>
        <position position="407"/>
    </location>
    <ligand>
        <name>ATP</name>
        <dbReference type="ChEBI" id="CHEBI:30616"/>
    </ligand>
</feature>
<feature type="binding site" evidence="1">
    <location>
        <position position="530"/>
    </location>
    <ligand>
        <name>Mg(2+)</name>
        <dbReference type="ChEBI" id="CHEBI:18420"/>
    </ligand>
</feature>
<feature type="binding site" evidence="1">
    <location>
        <position position="534"/>
    </location>
    <ligand>
        <name>Mg(2+)</name>
        <dbReference type="ChEBI" id="CHEBI:18420"/>
    </ligand>
</feature>
<protein>
    <recommendedName>
        <fullName evidence="1">Potassium-transporting ATPase ATP-binding subunit</fullName>
        <ecNumber evidence="1">7.2.2.6</ecNumber>
    </recommendedName>
    <alternativeName>
        <fullName evidence="1">ATP phosphohydrolase [potassium-transporting] B chain</fullName>
    </alternativeName>
    <alternativeName>
        <fullName evidence="1">Potassium-binding and translocating subunit B</fullName>
    </alternativeName>
    <alternativeName>
        <fullName evidence="1">Potassium-translocating ATPase B chain</fullName>
    </alternativeName>
</protein>
<organism>
    <name type="scientific">Bacillus thuringiensis (strain Al Hakam)</name>
    <dbReference type="NCBI Taxonomy" id="412694"/>
    <lineage>
        <taxon>Bacteria</taxon>
        <taxon>Bacillati</taxon>
        <taxon>Bacillota</taxon>
        <taxon>Bacilli</taxon>
        <taxon>Bacillales</taxon>
        <taxon>Bacillaceae</taxon>
        <taxon>Bacillus</taxon>
        <taxon>Bacillus cereus group</taxon>
    </lineage>
</organism>
<keyword id="KW-0067">ATP-binding</keyword>
<keyword id="KW-1003">Cell membrane</keyword>
<keyword id="KW-0406">Ion transport</keyword>
<keyword id="KW-0460">Magnesium</keyword>
<keyword id="KW-0472">Membrane</keyword>
<keyword id="KW-0479">Metal-binding</keyword>
<keyword id="KW-0547">Nucleotide-binding</keyword>
<keyword id="KW-0597">Phosphoprotein</keyword>
<keyword id="KW-0630">Potassium</keyword>
<keyword id="KW-0633">Potassium transport</keyword>
<keyword id="KW-1278">Translocase</keyword>
<keyword id="KW-0812">Transmembrane</keyword>
<keyword id="KW-1133">Transmembrane helix</keyword>
<keyword id="KW-0813">Transport</keyword>
<name>KDPB_BACAH</name>
<sequence length="692" mass="74102">MMRPVVVKEKQIHVVEDEVRQAKTMDRDIVKHAMKQSVAKLNPKVMIKNPIMFVVEIGFVITFILSFLPSHSSSIPGWFNITVSLILLFTVLFANFAEALAEGRGKAQADSLKQSKKDVFANVVKENGEIVQVSATDLRKDDVVIVKQGEMIPSDGEVIKGLASVDESAITGESAPVIKEAGGDFCSVTGGTMVVSDEITIVITSNPGESFIDKMISLVEGAARQKTPNEIALNTVLTSLTLIFLIVVVTLPIFTNYLGFQIDTAVLVALLVCLIPTTIGGLLSAIGIAGMDRVTKFNVLAMSGKAVEAAGDINTIILDKTGTITFGNRMAHTLLPVGNETIEQVGKWAAISSVLDETPEGRSVIEYVQAKSISYNRELAEQGEFIPFKAETRMSGVDLQDGTKVRKGAVGSVIEWVRSQGGTIPKDVNQKADFISKEGGTPLVVAVDNRIYGLIYLKDTVKPGMRERFEQLRQMGIKTVMCTGDNPLTAATIAKEAGVDEFVAECKPEDKIAVIKAEQDKGKLVAMTGDGTNDAPALAQADVGLAMNSGTTAAKEAANMIDLDSNPTKIIEVVGIGKQLLMTRGALTTFSIANDIAKYFAIIPAMFTLAIPQMEALNIMKLTSPLSAILSALLFNAVIIPLLIPLAMKGIAYKPMSSNALLGRNLLIYGLGGVIVPFIGIKIIDMIVGLFI</sequence>
<accession>A0RA13</accession>
<comment type="function">
    <text evidence="1">Part of the high-affinity ATP-driven potassium transport (or Kdp) system, which catalyzes the hydrolysis of ATP coupled with the electrogenic transport of potassium into the cytoplasm. This subunit is responsible for energy coupling to the transport system and for the release of the potassium ions to the cytoplasm.</text>
</comment>
<comment type="catalytic activity">
    <reaction evidence="1">
        <text>K(+)(out) + ATP + H2O = K(+)(in) + ADP + phosphate + H(+)</text>
        <dbReference type="Rhea" id="RHEA:16777"/>
        <dbReference type="ChEBI" id="CHEBI:15377"/>
        <dbReference type="ChEBI" id="CHEBI:15378"/>
        <dbReference type="ChEBI" id="CHEBI:29103"/>
        <dbReference type="ChEBI" id="CHEBI:30616"/>
        <dbReference type="ChEBI" id="CHEBI:43474"/>
        <dbReference type="ChEBI" id="CHEBI:456216"/>
        <dbReference type="EC" id="7.2.2.6"/>
    </reaction>
    <physiologicalReaction direction="left-to-right" evidence="1">
        <dbReference type="Rhea" id="RHEA:16778"/>
    </physiologicalReaction>
</comment>
<comment type="subunit">
    <text evidence="1">The system is composed of three essential subunits: KdpA, KdpB and KdpC.</text>
</comment>
<comment type="subcellular location">
    <subcellularLocation>
        <location evidence="1">Cell membrane</location>
        <topology evidence="1">Multi-pass membrane protein</topology>
    </subcellularLocation>
</comment>
<comment type="similarity">
    <text evidence="1">Belongs to the cation transport ATPase (P-type) (TC 3.A.3) family. Type IA subfamily.</text>
</comment>
<reference key="1">
    <citation type="journal article" date="2007" name="J. Bacteriol.">
        <title>The complete genome sequence of Bacillus thuringiensis Al Hakam.</title>
        <authorList>
            <person name="Challacombe J.F."/>
            <person name="Altherr M.R."/>
            <person name="Xie G."/>
            <person name="Bhotika S.S."/>
            <person name="Brown N."/>
            <person name="Bruce D."/>
            <person name="Campbell C.S."/>
            <person name="Campbell M.L."/>
            <person name="Chen J."/>
            <person name="Chertkov O."/>
            <person name="Cleland C."/>
            <person name="Dimitrijevic M."/>
            <person name="Doggett N.A."/>
            <person name="Fawcett J.J."/>
            <person name="Glavina T."/>
            <person name="Goodwin L.A."/>
            <person name="Green L.D."/>
            <person name="Han C.S."/>
            <person name="Hill K.K."/>
            <person name="Hitchcock P."/>
            <person name="Jackson P.J."/>
            <person name="Keim P."/>
            <person name="Kewalramani A.R."/>
            <person name="Longmire J."/>
            <person name="Lucas S."/>
            <person name="Malfatti S."/>
            <person name="Martinez D."/>
            <person name="McMurry K."/>
            <person name="Meincke L.J."/>
            <person name="Misra M."/>
            <person name="Moseman B.L."/>
            <person name="Mundt M."/>
            <person name="Munk A.C."/>
            <person name="Okinaka R.T."/>
            <person name="Parson-Quintana B."/>
            <person name="Reilly L.P."/>
            <person name="Richardson P."/>
            <person name="Robinson D.L."/>
            <person name="Saunders E."/>
            <person name="Tapia R."/>
            <person name="Tesmer J.G."/>
            <person name="Thayer N."/>
            <person name="Thompson L.S."/>
            <person name="Tice H."/>
            <person name="Ticknor L.O."/>
            <person name="Wills P.L."/>
            <person name="Gilna P."/>
            <person name="Brettin T.S."/>
        </authorList>
    </citation>
    <scope>NUCLEOTIDE SEQUENCE [LARGE SCALE GENOMIC DNA]</scope>
    <source>
        <strain>Al Hakam</strain>
    </source>
</reference>
<evidence type="ECO:0000255" key="1">
    <source>
        <dbReference type="HAMAP-Rule" id="MF_00285"/>
    </source>
</evidence>